<reference key="1">
    <citation type="journal article" date="1986" name="Virology">
        <title>The nucleotide sequence and genome organization of human papilloma virus type 11.</title>
        <authorList>
            <person name="Dartmann K."/>
            <person name="Schwarz E."/>
            <person name="Gissmann L."/>
            <person name="zur Hausen H."/>
        </authorList>
    </citation>
    <scope>NUCLEOTIDE SEQUENCE [GENOMIC DNA]</scope>
</reference>
<gene>
    <name evidence="1" type="primary">E2</name>
</gene>
<keyword id="KW-0002">3D-structure</keyword>
<keyword id="KW-0010">Activator</keyword>
<keyword id="KW-0235">DNA replication</keyword>
<keyword id="KW-0238">DNA-binding</keyword>
<keyword id="KW-0244">Early protein</keyword>
<keyword id="KW-1048">Host nucleus</keyword>
<keyword id="KW-0597">Phosphoprotein</keyword>
<keyword id="KW-1185">Reference proteome</keyword>
<keyword id="KW-0678">Repressor</keyword>
<keyword id="KW-0804">Transcription</keyword>
<keyword id="KW-0805">Transcription regulation</keyword>
<sequence length="367" mass="41709">MEAIAKRLDACQDQLLELYEENSIDIHKHIMHWKCIRLESVLLHKAKQMGLSHIGLQVVPPLTVSETKGHNAIEMQMHLESLAKTQYGVEPWTLQDTSYEMWLTPPKRCFKKQGNTVEVKFDGCEDNVMEYVVWTHIYLQDNDSWVKVTSSVDAKGIYYTCGQFKTYYVNFNKEAQKYGSTNHWEVCYGSTVICSPASVSSTVREVSIAEPTTYTPAQTTAPTVSACTTEDGVSAPPRKRARGPSTNNTLCVANIRSVDSTINNIVTDNYNKHQRRNNCHSAATPIVQLQGDSNCLKCFRYRLNDKYKHLFELASSTWHWASPEAPHKNAIVTLTYSSEEQRQQFLNSVKIPPTIRHKVGFMSLHLL</sequence>
<organism>
    <name type="scientific">Human papillomavirus 11</name>
    <dbReference type="NCBI Taxonomy" id="10580"/>
    <lineage>
        <taxon>Viruses</taxon>
        <taxon>Monodnaviria</taxon>
        <taxon>Shotokuvirae</taxon>
        <taxon>Cossaviricota</taxon>
        <taxon>Papovaviricetes</taxon>
        <taxon>Zurhausenvirales</taxon>
        <taxon>Papillomaviridae</taxon>
        <taxon>Firstpapillomavirinae</taxon>
        <taxon>Alphapapillomavirus</taxon>
        <taxon>Alphapapillomavirus 10</taxon>
    </lineage>
</organism>
<protein>
    <recommendedName>
        <fullName evidence="1">Regulatory protein E2</fullName>
    </recommendedName>
</protein>
<feature type="chain" id="PRO_0000133190" description="Regulatory protein E2">
    <location>
        <begin position="1"/>
        <end position="367"/>
    </location>
</feature>
<feature type="region of interest" description="Transactivation domain" evidence="1">
    <location>
        <begin position="1"/>
        <end position="200"/>
    </location>
</feature>
<feature type="region of interest" description="Disordered" evidence="2">
    <location>
        <begin position="225"/>
        <end position="246"/>
    </location>
</feature>
<feature type="region of interest" description="DNA-binding domain" evidence="1">
    <location>
        <begin position="283"/>
        <end position="367"/>
    </location>
</feature>
<feature type="helix" evidence="4">
    <location>
        <begin position="4"/>
        <end position="21"/>
    </location>
</feature>
<feature type="helix" evidence="4">
    <location>
        <begin position="26"/>
        <end position="48"/>
    </location>
</feature>
<feature type="strand" evidence="3">
    <location>
        <begin position="52"/>
        <end position="54"/>
    </location>
</feature>
<feature type="helix" evidence="4">
    <location>
        <begin position="62"/>
        <end position="83"/>
    </location>
</feature>
<feature type="turn" evidence="4">
    <location>
        <begin position="86"/>
        <end position="89"/>
    </location>
</feature>
<feature type="turn" evidence="4">
    <location>
        <begin position="94"/>
        <end position="97"/>
    </location>
</feature>
<feature type="helix" evidence="4">
    <location>
        <begin position="99"/>
        <end position="102"/>
    </location>
</feature>
<feature type="strand" evidence="4">
    <location>
        <begin position="104"/>
        <end position="106"/>
    </location>
</feature>
<feature type="strand" evidence="4">
    <location>
        <begin position="109"/>
        <end position="121"/>
    </location>
</feature>
<feature type="strand" evidence="4">
    <location>
        <begin position="128"/>
        <end position="141"/>
    </location>
</feature>
<feature type="strand" evidence="4">
    <location>
        <begin position="144"/>
        <end position="152"/>
    </location>
</feature>
<feature type="strand" evidence="4">
    <location>
        <begin position="154"/>
        <end position="161"/>
    </location>
</feature>
<feature type="strand" evidence="4">
    <location>
        <begin position="164"/>
        <end position="170"/>
    </location>
</feature>
<feature type="helix" evidence="4">
    <location>
        <begin position="171"/>
        <end position="178"/>
    </location>
</feature>
<feature type="strand" evidence="4">
    <location>
        <begin position="180"/>
        <end position="182"/>
    </location>
</feature>
<feature type="strand" evidence="4">
    <location>
        <begin position="184"/>
        <end position="188"/>
    </location>
</feature>
<feature type="strand" evidence="4">
    <location>
        <begin position="191"/>
        <end position="194"/>
    </location>
</feature>
<organismHost>
    <name type="scientific">Homo sapiens</name>
    <name type="common">Human</name>
    <dbReference type="NCBI Taxonomy" id="9606"/>
</organismHost>
<evidence type="ECO:0000255" key="1">
    <source>
        <dbReference type="HAMAP-Rule" id="MF_04001"/>
    </source>
</evidence>
<evidence type="ECO:0000256" key="2">
    <source>
        <dbReference type="SAM" id="MobiDB-lite"/>
    </source>
</evidence>
<evidence type="ECO:0007829" key="3">
    <source>
        <dbReference type="PDB" id="1R6K"/>
    </source>
</evidence>
<evidence type="ECO:0007829" key="4">
    <source>
        <dbReference type="PDB" id="1R6N"/>
    </source>
</evidence>
<dbReference type="EMBL" id="M14119">
    <property type="protein sequence ID" value="AAA46930.1"/>
    <property type="molecule type" value="Genomic_DNA"/>
</dbReference>
<dbReference type="PIR" id="A03668">
    <property type="entry name" value="W2WL11"/>
</dbReference>
<dbReference type="PDB" id="1R6K">
    <property type="method" value="X-ray"/>
    <property type="resolution" value="2.50 A"/>
    <property type="chains" value="A=2-201"/>
</dbReference>
<dbReference type="PDB" id="1R6N">
    <property type="method" value="X-ray"/>
    <property type="resolution" value="2.40 A"/>
    <property type="chains" value="A=2-201"/>
</dbReference>
<dbReference type="PDBsum" id="1R6K"/>
<dbReference type="PDBsum" id="1R6N"/>
<dbReference type="SMR" id="P04015"/>
<dbReference type="IntAct" id="P04015">
    <property type="interactions" value="42"/>
</dbReference>
<dbReference type="MINT" id="P04015"/>
<dbReference type="BindingDB" id="P04015"/>
<dbReference type="ChEMBL" id="CHEMBL5830"/>
<dbReference type="DrugBank" id="DB04330">
    <property type="generic name" value="Bilh 434"/>
</dbReference>
<dbReference type="DrugCentral" id="P04015"/>
<dbReference type="EvolutionaryTrace" id="P04015"/>
<dbReference type="Proteomes" id="UP000008222">
    <property type="component" value="Genome"/>
</dbReference>
<dbReference type="GO" id="GO:0042025">
    <property type="term" value="C:host cell nucleus"/>
    <property type="evidence" value="ECO:0007669"/>
    <property type="project" value="UniProtKB-SubCell"/>
</dbReference>
<dbReference type="GO" id="GO:0003677">
    <property type="term" value="F:DNA binding"/>
    <property type="evidence" value="ECO:0007669"/>
    <property type="project" value="UniProtKB-UniRule"/>
</dbReference>
<dbReference type="GO" id="GO:0003700">
    <property type="term" value="F:DNA-binding transcription factor activity"/>
    <property type="evidence" value="ECO:0007669"/>
    <property type="project" value="UniProtKB-UniRule"/>
</dbReference>
<dbReference type="GO" id="GO:0000166">
    <property type="term" value="F:nucleotide binding"/>
    <property type="evidence" value="ECO:0007669"/>
    <property type="project" value="UniProtKB-UniRule"/>
</dbReference>
<dbReference type="GO" id="GO:0006260">
    <property type="term" value="P:DNA replication"/>
    <property type="evidence" value="ECO:0007669"/>
    <property type="project" value="UniProtKB-KW"/>
</dbReference>
<dbReference type="GO" id="GO:0006351">
    <property type="term" value="P:DNA-templated transcription"/>
    <property type="evidence" value="ECO:0007669"/>
    <property type="project" value="UniProtKB-UniRule"/>
</dbReference>
<dbReference type="GO" id="GO:0006275">
    <property type="term" value="P:regulation of DNA replication"/>
    <property type="evidence" value="ECO:0007669"/>
    <property type="project" value="UniProtKB-UniRule"/>
</dbReference>
<dbReference type="GO" id="GO:0039693">
    <property type="term" value="P:viral DNA genome replication"/>
    <property type="evidence" value="ECO:0000314"/>
    <property type="project" value="UniProtKB"/>
</dbReference>
<dbReference type="FunFam" id="3.30.70.330:FF:000918">
    <property type="entry name" value="Regulatory protein E2"/>
    <property type="match status" value="1"/>
</dbReference>
<dbReference type="Gene3D" id="3.30.70.330">
    <property type="match status" value="1"/>
</dbReference>
<dbReference type="Gene3D" id="1.10.287.30">
    <property type="entry name" value="E2 (early) protein, N terminal domain, subdomain 1"/>
    <property type="match status" value="1"/>
</dbReference>
<dbReference type="Gene3D" id="2.170.200.10">
    <property type="entry name" value="Papillomavirus E2 early protein domain"/>
    <property type="match status" value="1"/>
</dbReference>
<dbReference type="HAMAP" id="MF_04001">
    <property type="entry name" value="PPV_E2"/>
    <property type="match status" value="1"/>
</dbReference>
<dbReference type="InterPro" id="IPR035975">
    <property type="entry name" value="E2/EBNA1_C_sf"/>
</dbReference>
<dbReference type="InterPro" id="IPR012677">
    <property type="entry name" value="Nucleotide-bd_a/b_plait_sf"/>
</dbReference>
<dbReference type="InterPro" id="IPR000427">
    <property type="entry name" value="Papillomavirus_E2_C"/>
</dbReference>
<dbReference type="InterPro" id="IPR001866">
    <property type="entry name" value="PPV_E2_N"/>
</dbReference>
<dbReference type="InterPro" id="IPR033668">
    <property type="entry name" value="Reg_prot_E2"/>
</dbReference>
<dbReference type="InterPro" id="IPR036050">
    <property type="entry name" value="Regulatory_protein_E2_N"/>
</dbReference>
<dbReference type="InterPro" id="IPR042503">
    <property type="entry name" value="Regulatory_protein_E2_N_1"/>
</dbReference>
<dbReference type="InterPro" id="IPR042504">
    <property type="entry name" value="Regulatory_protein_E2_N_2"/>
</dbReference>
<dbReference type="Pfam" id="PF00511">
    <property type="entry name" value="PPV_E2_C"/>
    <property type="match status" value="1"/>
</dbReference>
<dbReference type="Pfam" id="PF00508">
    <property type="entry name" value="PPV_E2_N"/>
    <property type="match status" value="1"/>
</dbReference>
<dbReference type="SUPFAM" id="SSF51332">
    <property type="entry name" value="E2 regulatory, transactivation domain"/>
    <property type="match status" value="1"/>
</dbReference>
<dbReference type="SUPFAM" id="SSF54957">
    <property type="entry name" value="Viral DNA-binding domain"/>
    <property type="match status" value="1"/>
</dbReference>
<comment type="function">
    <text evidence="1">Plays a role in the initiation of viral DNA replication. A dimer of E2 interacts with a dimer of E1 in order to improve specificity of E1 DNA binding activity. Once the complex recognizes and binds DNA at specific sites, the E2 dimer is removed from DNA. E2 also regulates viral transcription through binding to the E2RE response element (5'-ACCNNNNNNGGT-3') present in multiple copies in the regulatory regions of the viral genome. Activates or represses transcription depending on E2RE's position with regards to proximal promoter elements including the TATA-box. Repression occurs by sterically hindering the assembly of the transcription initiation complex.</text>
</comment>
<comment type="subunit">
    <text evidence="1">Binds DNA as homodimer. Interacts with protein E1; this interaction greatly increases E1 DNA-binding activity. Interacts with protein L1; this interaction enhances E2-dependent replication and transcription activation. Interacts with protein L2; this interaction inhibits E2 transcriptional activity but not DNA replication function E2. Interacts with protein E7; this interaction inhibits E7 oncogenic activity. Interacts with host TAF1; this interaction modulates E2-dependent transcriptional regulation. Interacts with host BRD4; this interaction mediates E2 transcriptional activation function. Additionally, the interaction with host BRD4 on mitotic chromosomes mediates tethering of the viral genome. Interacts with host TOPBP1; this interaction is required for optimal viral DNA replication.</text>
</comment>
<comment type="interaction">
    <interactant intactId="EBI-7010556">
        <id>P04015</id>
    </interactant>
    <interactant intactId="EBI-723869">
        <id>O60885</id>
        <label>BRD4</label>
    </interactant>
    <organismsDiffer>true</organismsDiffer>
    <experiments>3</experiments>
</comment>
<comment type="subcellular location">
    <subcellularLocation>
        <location evidence="1">Host nucleus</location>
    </subcellularLocation>
</comment>
<comment type="PTM">
    <text evidence="1">Phosphorylated.</text>
</comment>
<comment type="similarity">
    <text evidence="1">Belongs to the papillomaviridae E2 protein family.</text>
</comment>
<name>VE2_HPV11</name>
<accession>P04015</accession>
<proteinExistence type="evidence at protein level"/>